<sequence length="239" mass="25950">MATPHINAEMGDFADVVLMPGDPLRAKYIAETFLEDAREVNNVRGMLGFTGTYKGRKISVMGHGMGIPSCSIYTKELITDFGVKKIIRVGSCGAVLPHVKLRDVVIGMGACTDSKVNRIRFKDHDFAAIADFDMVRNAVDAAKALGIDARVGNLFSADLFYSPDGEMFDVMEKYGILGVEMEAAGIYGVAAEFGAKALTICTVSDHIRTHEQTTAAERQTTFNDMIKIALESVLLGDKE</sequence>
<evidence type="ECO:0000250" key="1">
    <source>
        <dbReference type="UniProtKB" id="P50389"/>
    </source>
</evidence>
<evidence type="ECO:0000255" key="2">
    <source>
        <dbReference type="HAMAP-Rule" id="MF_01627"/>
    </source>
</evidence>
<dbReference type="EC" id="2.4.2.1" evidence="2"/>
<dbReference type="EMBL" id="CP000038">
    <property type="protein sequence ID" value="AAZ91003.1"/>
    <property type="molecule type" value="Genomic_DNA"/>
</dbReference>
<dbReference type="RefSeq" id="WP_000224877.1">
    <property type="nucleotide sequence ID" value="NC_007384.1"/>
</dbReference>
<dbReference type="SMR" id="Q3YU09"/>
<dbReference type="GeneID" id="93777460"/>
<dbReference type="KEGG" id="ssn:SSON_4535"/>
<dbReference type="HOGENOM" id="CLU_068457_2_0_6"/>
<dbReference type="Proteomes" id="UP000002529">
    <property type="component" value="Chromosome"/>
</dbReference>
<dbReference type="GO" id="GO:0005829">
    <property type="term" value="C:cytosol"/>
    <property type="evidence" value="ECO:0007669"/>
    <property type="project" value="TreeGrafter"/>
</dbReference>
<dbReference type="GO" id="GO:0004731">
    <property type="term" value="F:purine-nucleoside phosphorylase activity"/>
    <property type="evidence" value="ECO:0007669"/>
    <property type="project" value="UniProtKB-UniRule"/>
</dbReference>
<dbReference type="GO" id="GO:0006152">
    <property type="term" value="P:purine nucleoside catabolic process"/>
    <property type="evidence" value="ECO:0007669"/>
    <property type="project" value="TreeGrafter"/>
</dbReference>
<dbReference type="CDD" id="cd09006">
    <property type="entry name" value="PNP_EcPNPI-like"/>
    <property type="match status" value="1"/>
</dbReference>
<dbReference type="FunFam" id="3.40.50.1580:FF:000002">
    <property type="entry name" value="Purine nucleoside phosphorylase DeoD-type"/>
    <property type="match status" value="1"/>
</dbReference>
<dbReference type="Gene3D" id="3.40.50.1580">
    <property type="entry name" value="Nucleoside phosphorylase domain"/>
    <property type="match status" value="1"/>
</dbReference>
<dbReference type="HAMAP" id="MF_01627">
    <property type="entry name" value="Pur_nucleosid_phosp"/>
    <property type="match status" value="1"/>
</dbReference>
<dbReference type="InterPro" id="IPR004402">
    <property type="entry name" value="DeoD-type"/>
</dbReference>
<dbReference type="InterPro" id="IPR018016">
    <property type="entry name" value="Nucleoside_phosphorylase_CS"/>
</dbReference>
<dbReference type="InterPro" id="IPR000845">
    <property type="entry name" value="Nucleoside_phosphorylase_d"/>
</dbReference>
<dbReference type="InterPro" id="IPR035994">
    <property type="entry name" value="Nucleoside_phosphorylase_sf"/>
</dbReference>
<dbReference type="NCBIfam" id="TIGR00107">
    <property type="entry name" value="deoD"/>
    <property type="match status" value="1"/>
</dbReference>
<dbReference type="NCBIfam" id="NF004489">
    <property type="entry name" value="PRK05819.1"/>
    <property type="match status" value="1"/>
</dbReference>
<dbReference type="NCBIfam" id="NF009914">
    <property type="entry name" value="PRK13374.1"/>
    <property type="match status" value="1"/>
</dbReference>
<dbReference type="PANTHER" id="PTHR43691:SF2">
    <property type="entry name" value="PURINE NUCLEOSIDE PHOSPHORYLASE DEOD-TYPE"/>
    <property type="match status" value="1"/>
</dbReference>
<dbReference type="PANTHER" id="PTHR43691">
    <property type="entry name" value="URIDINE PHOSPHORYLASE"/>
    <property type="match status" value="1"/>
</dbReference>
<dbReference type="Pfam" id="PF01048">
    <property type="entry name" value="PNP_UDP_1"/>
    <property type="match status" value="1"/>
</dbReference>
<dbReference type="SUPFAM" id="SSF53167">
    <property type="entry name" value="Purine and uridine phosphorylases"/>
    <property type="match status" value="1"/>
</dbReference>
<dbReference type="PROSITE" id="PS01232">
    <property type="entry name" value="PNP_UDP_1"/>
    <property type="match status" value="1"/>
</dbReference>
<reference key="1">
    <citation type="journal article" date="2005" name="Nucleic Acids Res.">
        <title>Genome dynamics and diversity of Shigella species, the etiologic agents of bacillary dysentery.</title>
        <authorList>
            <person name="Yang F."/>
            <person name="Yang J."/>
            <person name="Zhang X."/>
            <person name="Chen L."/>
            <person name="Jiang Y."/>
            <person name="Yan Y."/>
            <person name="Tang X."/>
            <person name="Wang J."/>
            <person name="Xiong Z."/>
            <person name="Dong J."/>
            <person name="Xue Y."/>
            <person name="Zhu Y."/>
            <person name="Xu X."/>
            <person name="Sun L."/>
            <person name="Chen S."/>
            <person name="Nie H."/>
            <person name="Peng J."/>
            <person name="Xu J."/>
            <person name="Wang Y."/>
            <person name="Yuan Z."/>
            <person name="Wen Y."/>
            <person name="Yao Z."/>
            <person name="Shen Y."/>
            <person name="Qiang B."/>
            <person name="Hou Y."/>
            <person name="Yu J."/>
            <person name="Jin Q."/>
        </authorList>
    </citation>
    <scope>NUCLEOTIDE SEQUENCE [LARGE SCALE GENOMIC DNA]</scope>
    <source>
        <strain>Ss046</strain>
    </source>
</reference>
<gene>
    <name evidence="2" type="primary">deoD</name>
    <name type="ordered locus">SSON_4535</name>
</gene>
<organism>
    <name type="scientific">Shigella sonnei (strain Ss046)</name>
    <dbReference type="NCBI Taxonomy" id="300269"/>
    <lineage>
        <taxon>Bacteria</taxon>
        <taxon>Pseudomonadati</taxon>
        <taxon>Pseudomonadota</taxon>
        <taxon>Gammaproteobacteria</taxon>
        <taxon>Enterobacterales</taxon>
        <taxon>Enterobacteriaceae</taxon>
        <taxon>Shigella</taxon>
    </lineage>
</organism>
<protein>
    <recommendedName>
        <fullName evidence="2">Purine nucleoside phosphorylase DeoD-type</fullName>
        <shortName evidence="2">PNP</shortName>
        <ecNumber evidence="2">2.4.2.1</ecNumber>
    </recommendedName>
</protein>
<accession>Q3YU09</accession>
<name>DEOD_SHISS</name>
<comment type="function">
    <text evidence="2">Catalyzes the reversible phosphorolytic breakdown of the N-glycosidic bond in the beta-(deoxy)ribonucleoside molecules, with the formation of the corresponding free purine bases and pentose-1-phosphate.</text>
</comment>
<comment type="catalytic activity">
    <reaction evidence="2">
        <text>a purine D-ribonucleoside + phosphate = a purine nucleobase + alpha-D-ribose 1-phosphate</text>
        <dbReference type="Rhea" id="RHEA:19805"/>
        <dbReference type="ChEBI" id="CHEBI:26386"/>
        <dbReference type="ChEBI" id="CHEBI:43474"/>
        <dbReference type="ChEBI" id="CHEBI:57720"/>
        <dbReference type="ChEBI" id="CHEBI:142355"/>
        <dbReference type="EC" id="2.4.2.1"/>
    </reaction>
</comment>
<comment type="catalytic activity">
    <reaction evidence="2">
        <text>a purine 2'-deoxy-D-ribonucleoside + phosphate = a purine nucleobase + 2-deoxy-alpha-D-ribose 1-phosphate</text>
        <dbReference type="Rhea" id="RHEA:36431"/>
        <dbReference type="ChEBI" id="CHEBI:26386"/>
        <dbReference type="ChEBI" id="CHEBI:43474"/>
        <dbReference type="ChEBI" id="CHEBI:57259"/>
        <dbReference type="ChEBI" id="CHEBI:142361"/>
        <dbReference type="EC" id="2.4.2.1"/>
    </reaction>
</comment>
<comment type="subunit">
    <text evidence="2">Homohexamer; trimer of homodimers.</text>
</comment>
<comment type="similarity">
    <text evidence="2">Belongs to the PNP/UDP phosphorylase family.</text>
</comment>
<keyword id="KW-0007">Acetylation</keyword>
<keyword id="KW-0328">Glycosyltransferase</keyword>
<keyword id="KW-1185">Reference proteome</keyword>
<keyword id="KW-0808">Transferase</keyword>
<feature type="chain" id="PRO_0000063165" description="Purine nucleoside phosphorylase DeoD-type">
    <location>
        <begin position="1"/>
        <end position="239"/>
    </location>
</feature>
<feature type="active site" description="Proton donor" evidence="2">
    <location>
        <position position="205"/>
    </location>
</feature>
<feature type="binding site" evidence="1">
    <location>
        <position position="5"/>
    </location>
    <ligand>
        <name>a purine D-ribonucleoside</name>
        <dbReference type="ChEBI" id="CHEBI:142355"/>
        <note>ligand shared between dimeric partners</note>
    </ligand>
</feature>
<feature type="binding site" description="in other chain" evidence="1">
    <location>
        <position position="21"/>
    </location>
    <ligand>
        <name>phosphate</name>
        <dbReference type="ChEBI" id="CHEBI:43474"/>
        <note>ligand shared between dimeric partners</note>
    </ligand>
</feature>
<feature type="binding site" description="in other chain" evidence="1">
    <location>
        <position position="25"/>
    </location>
    <ligand>
        <name>phosphate</name>
        <dbReference type="ChEBI" id="CHEBI:43474"/>
        <note>ligand shared between dimeric partners</note>
    </ligand>
</feature>
<feature type="binding site" evidence="1">
    <location>
        <position position="44"/>
    </location>
    <ligand>
        <name>phosphate</name>
        <dbReference type="ChEBI" id="CHEBI:43474"/>
        <note>ligand shared between dimeric partners</note>
    </ligand>
</feature>
<feature type="binding site" description="in other chain" evidence="1">
    <location>
        <begin position="88"/>
        <end position="91"/>
    </location>
    <ligand>
        <name>phosphate</name>
        <dbReference type="ChEBI" id="CHEBI:43474"/>
        <note>ligand shared between dimeric partners</note>
    </ligand>
</feature>
<feature type="binding site" description="in other chain" evidence="1">
    <location>
        <begin position="180"/>
        <end position="182"/>
    </location>
    <ligand>
        <name>a purine D-ribonucleoside</name>
        <dbReference type="ChEBI" id="CHEBI:142355"/>
        <note>ligand shared between dimeric partners</note>
    </ligand>
</feature>
<feature type="binding site" description="in other chain" evidence="1">
    <location>
        <begin position="204"/>
        <end position="205"/>
    </location>
    <ligand>
        <name>a purine D-ribonucleoside</name>
        <dbReference type="ChEBI" id="CHEBI:142355"/>
        <note>ligand shared between dimeric partners</note>
    </ligand>
</feature>
<feature type="site" description="Important for catalytic activity" evidence="2">
    <location>
        <position position="218"/>
    </location>
</feature>
<feature type="modified residue" description="N6-acetyllysine" evidence="2">
    <location>
        <position position="27"/>
    </location>
</feature>
<proteinExistence type="inferred from homology"/>